<accession>P66370</accession>
<accession>O84446</accession>
<accession>Q9PJV4</accession>
<organism>
    <name type="scientific">Chlamydia trachomatis serovar D (strain ATCC VR-885 / DSM 19411 / UW-3/Cx)</name>
    <dbReference type="NCBI Taxonomy" id="272561"/>
    <lineage>
        <taxon>Bacteria</taxon>
        <taxon>Pseudomonadati</taxon>
        <taxon>Chlamydiota</taxon>
        <taxon>Chlamydiia</taxon>
        <taxon>Chlamydiales</taxon>
        <taxon>Chlamydiaceae</taxon>
        <taxon>Chlamydia/Chlamydophila group</taxon>
        <taxon>Chlamydia</taxon>
    </lineage>
</organism>
<dbReference type="EMBL" id="AE001273">
    <property type="protein sequence ID" value="AAC68038.2"/>
    <property type="status" value="ALT_INIT"/>
    <property type="molecule type" value="Genomic_DNA"/>
</dbReference>
<dbReference type="PIR" id="H71514">
    <property type="entry name" value="H71514"/>
</dbReference>
<dbReference type="RefSeq" id="NP_219951.2">
    <property type="nucleotide sequence ID" value="NC_000117.1"/>
</dbReference>
<dbReference type="RefSeq" id="WP_014316028.1">
    <property type="nucleotide sequence ID" value="NC_000117.1"/>
</dbReference>
<dbReference type="SMR" id="P66370"/>
<dbReference type="FunCoup" id="P66370">
    <property type="interactions" value="247"/>
</dbReference>
<dbReference type="STRING" id="272561.CT_439"/>
<dbReference type="EnsemblBacteria" id="AAC68038">
    <property type="protein sequence ID" value="AAC68038"/>
    <property type="gene ID" value="CT_439"/>
</dbReference>
<dbReference type="GeneID" id="884680"/>
<dbReference type="KEGG" id="ctr:CT_439"/>
<dbReference type="PATRIC" id="fig|272561.5.peg.474"/>
<dbReference type="HOGENOM" id="CLU_104295_1_2_0"/>
<dbReference type="InParanoid" id="P66370"/>
<dbReference type="OrthoDB" id="9802366at2"/>
<dbReference type="Proteomes" id="UP000000431">
    <property type="component" value="Chromosome"/>
</dbReference>
<dbReference type="GO" id="GO:0005840">
    <property type="term" value="C:ribosome"/>
    <property type="evidence" value="ECO:0000318"/>
    <property type="project" value="GO_Central"/>
</dbReference>
<dbReference type="GO" id="GO:0015935">
    <property type="term" value="C:small ribosomal subunit"/>
    <property type="evidence" value="ECO:0007669"/>
    <property type="project" value="InterPro"/>
</dbReference>
<dbReference type="GO" id="GO:0019843">
    <property type="term" value="F:rRNA binding"/>
    <property type="evidence" value="ECO:0007669"/>
    <property type="project" value="UniProtKB-UniRule"/>
</dbReference>
<dbReference type="GO" id="GO:0003735">
    <property type="term" value="F:structural constituent of ribosome"/>
    <property type="evidence" value="ECO:0000318"/>
    <property type="project" value="GO_Central"/>
</dbReference>
<dbReference type="GO" id="GO:0000049">
    <property type="term" value="F:tRNA binding"/>
    <property type="evidence" value="ECO:0007669"/>
    <property type="project" value="UniProtKB-UniRule"/>
</dbReference>
<dbReference type="GO" id="GO:0006412">
    <property type="term" value="P:translation"/>
    <property type="evidence" value="ECO:0000318"/>
    <property type="project" value="GO_Central"/>
</dbReference>
<dbReference type="CDD" id="cd03368">
    <property type="entry name" value="Ribosomal_S12"/>
    <property type="match status" value="1"/>
</dbReference>
<dbReference type="FunFam" id="2.40.50.140:FF:000001">
    <property type="entry name" value="30S ribosomal protein S12"/>
    <property type="match status" value="1"/>
</dbReference>
<dbReference type="Gene3D" id="2.40.50.140">
    <property type="entry name" value="Nucleic acid-binding proteins"/>
    <property type="match status" value="1"/>
</dbReference>
<dbReference type="HAMAP" id="MF_00403_B">
    <property type="entry name" value="Ribosomal_uS12_B"/>
    <property type="match status" value="1"/>
</dbReference>
<dbReference type="InterPro" id="IPR012340">
    <property type="entry name" value="NA-bd_OB-fold"/>
</dbReference>
<dbReference type="InterPro" id="IPR006032">
    <property type="entry name" value="Ribosomal_uS12"/>
</dbReference>
<dbReference type="InterPro" id="IPR005679">
    <property type="entry name" value="Ribosomal_uS12_bac"/>
</dbReference>
<dbReference type="NCBIfam" id="TIGR00981">
    <property type="entry name" value="rpsL_bact"/>
    <property type="match status" value="1"/>
</dbReference>
<dbReference type="PANTHER" id="PTHR11652">
    <property type="entry name" value="30S RIBOSOMAL PROTEIN S12 FAMILY MEMBER"/>
    <property type="match status" value="1"/>
</dbReference>
<dbReference type="Pfam" id="PF00164">
    <property type="entry name" value="Ribosom_S12_S23"/>
    <property type="match status" value="1"/>
</dbReference>
<dbReference type="PIRSF" id="PIRSF002133">
    <property type="entry name" value="Ribosomal_S12/S23"/>
    <property type="match status" value="1"/>
</dbReference>
<dbReference type="PRINTS" id="PR01034">
    <property type="entry name" value="RIBOSOMALS12"/>
</dbReference>
<dbReference type="SUPFAM" id="SSF50249">
    <property type="entry name" value="Nucleic acid-binding proteins"/>
    <property type="match status" value="1"/>
</dbReference>
<dbReference type="PROSITE" id="PS00055">
    <property type="entry name" value="RIBOSOMAL_S12"/>
    <property type="match status" value="1"/>
</dbReference>
<evidence type="ECO:0000255" key="1">
    <source>
        <dbReference type="HAMAP-Rule" id="MF_00403"/>
    </source>
</evidence>
<evidence type="ECO:0000256" key="2">
    <source>
        <dbReference type="SAM" id="MobiDB-lite"/>
    </source>
</evidence>
<evidence type="ECO:0000305" key="3"/>
<name>RS12_CHLTR</name>
<sequence length="123" mass="13701">MPTINQLIRKKRQSGATRKKSPALQKSPQKRGVCLQVKTKTPKKPNSALRKVAWVRLSNGQEVIAYIGGEGHNLQEHSIVLVQGGRVKDLPGVRYHIVRGALDCAAVKNRKQSRSRYGAKRPK</sequence>
<keyword id="KW-1185">Reference proteome</keyword>
<keyword id="KW-0687">Ribonucleoprotein</keyword>
<keyword id="KW-0689">Ribosomal protein</keyword>
<keyword id="KW-0694">RNA-binding</keyword>
<keyword id="KW-0699">rRNA-binding</keyword>
<keyword id="KW-0820">tRNA-binding</keyword>
<gene>
    <name evidence="1" type="primary">rpsL</name>
    <name type="synonym">rs12</name>
    <name type="ordered locus">CT_439</name>
</gene>
<feature type="chain" id="PRO_0000146206" description="Small ribosomal subunit protein uS12">
    <location>
        <begin position="1"/>
        <end position="123"/>
    </location>
</feature>
<feature type="region of interest" description="Disordered" evidence="2">
    <location>
        <begin position="1"/>
        <end position="45"/>
    </location>
</feature>
<feature type="compositionally biased region" description="Basic residues" evidence="2">
    <location>
        <begin position="8"/>
        <end position="21"/>
    </location>
</feature>
<comment type="function">
    <text evidence="1">With S4 and S5 plays an important role in translational accuracy.</text>
</comment>
<comment type="function">
    <text evidence="1">Interacts with and stabilizes bases of the 16S rRNA that are involved in tRNA selection in the A site and with the mRNA backbone. Located at the interface of the 30S and 50S subunits, it traverses the body of the 30S subunit contacting proteins on the other side and probably holding the rRNA structure together. The combined cluster of proteins S8, S12 and S17 appears to hold together the shoulder and platform of the 30S subunit.</text>
</comment>
<comment type="subunit">
    <text evidence="1">Part of the 30S ribosomal subunit. Contacts proteins S8 and S17. May interact with IF1 in the 30S initiation complex.</text>
</comment>
<comment type="similarity">
    <text evidence="1">Belongs to the universal ribosomal protein uS12 family.</text>
</comment>
<comment type="caution">
    <text evidence="3">Because the enzyme that would modify Asp-89 to 3-methylthioaspartic acid has not been found in the proteome of this organism, that modification is not predicted.</text>
</comment>
<comment type="sequence caution" evidence="3">
    <conflict type="erroneous initiation">
        <sequence resource="EMBL-CDS" id="AAC68038"/>
    </conflict>
</comment>
<protein>
    <recommendedName>
        <fullName evidence="1">Small ribosomal subunit protein uS12</fullName>
    </recommendedName>
    <alternativeName>
        <fullName evidence="3">30S ribosomal protein S12</fullName>
    </alternativeName>
</protein>
<reference key="1">
    <citation type="journal article" date="1998" name="Science">
        <title>Genome sequence of an obligate intracellular pathogen of humans: Chlamydia trachomatis.</title>
        <authorList>
            <person name="Stephens R.S."/>
            <person name="Kalman S."/>
            <person name="Lammel C.J."/>
            <person name="Fan J."/>
            <person name="Marathe R."/>
            <person name="Aravind L."/>
            <person name="Mitchell W.P."/>
            <person name="Olinger L."/>
            <person name="Tatusov R.L."/>
            <person name="Zhao Q."/>
            <person name="Koonin E.V."/>
            <person name="Davis R.W."/>
        </authorList>
    </citation>
    <scope>NUCLEOTIDE SEQUENCE [LARGE SCALE GENOMIC DNA]</scope>
    <source>
        <strain>ATCC VR-885 / DSM 19411 / UW-3/Cx</strain>
    </source>
</reference>
<proteinExistence type="inferred from homology"/>